<sequence length="382" mass="42870">MHPDQIRQLRLQESSNTHPNLAILFIFIALAAVIVLLICLLSVILLLRYTRHGRILLKNTNPGELDDEALENEHIDEEGFSLLDDMGKERYLQAREFELNSMKSNVNTDAKLLDFLQVQEKGVLAWHFIPNQEYNCYVKNKTELSFLGNEECCMQTNLPLQRINEVYYFEVKLLDVPIDTLVSIGLATKPYPPFRLPGWNFWSTAYVSDGTRRSNSPFTGKPYSSFYQQGDVIGVGYKPKCNRIFFTRNGRRCAELPCTYRNLYPTVGAIGPCTLHVNLGQAGYVFIEANIKKWRLAPAVGSLAPPPSYSTSQPTISWDAASESSAGTTTQGDTNRPDKSKNRSPPINFDGTSYDAAGNVFSPSSSNNQAYQMHSMPATDEV</sequence>
<feature type="chain" id="PRO_0000314094" description="SPRY domain-containing protein C285.10c">
    <location>
        <begin position="1"/>
        <end position="382"/>
    </location>
</feature>
<feature type="transmembrane region" description="Helical" evidence="1">
    <location>
        <begin position="21"/>
        <end position="41"/>
    </location>
</feature>
<feature type="domain" description="B30.2/SPRY" evidence="2">
    <location>
        <begin position="79"/>
        <end position="284"/>
    </location>
</feature>
<feature type="region of interest" description="Disordered" evidence="3">
    <location>
        <begin position="304"/>
        <end position="382"/>
    </location>
</feature>
<feature type="compositionally biased region" description="Polar residues" evidence="3">
    <location>
        <begin position="309"/>
        <end position="334"/>
    </location>
</feature>
<feature type="compositionally biased region" description="Polar residues" evidence="3">
    <location>
        <begin position="361"/>
        <end position="372"/>
    </location>
</feature>
<accession>O74497</accession>
<comment type="subcellular location">
    <subcellularLocation>
        <location evidence="4">Cytoplasm</location>
    </subcellularLocation>
    <subcellularLocation>
        <location evidence="5">Membrane</location>
        <topology evidence="5">Single-pass membrane protein</topology>
    </subcellularLocation>
</comment>
<reference key="1">
    <citation type="journal article" date="2002" name="Nature">
        <title>The genome sequence of Schizosaccharomyces pombe.</title>
        <authorList>
            <person name="Wood V."/>
            <person name="Gwilliam R."/>
            <person name="Rajandream M.A."/>
            <person name="Lyne M.H."/>
            <person name="Lyne R."/>
            <person name="Stewart A."/>
            <person name="Sgouros J.G."/>
            <person name="Peat N."/>
            <person name="Hayles J."/>
            <person name="Baker S.G."/>
            <person name="Basham D."/>
            <person name="Bowman S."/>
            <person name="Brooks K."/>
            <person name="Brown D."/>
            <person name="Brown S."/>
            <person name="Chillingworth T."/>
            <person name="Churcher C.M."/>
            <person name="Collins M."/>
            <person name="Connor R."/>
            <person name="Cronin A."/>
            <person name="Davis P."/>
            <person name="Feltwell T."/>
            <person name="Fraser A."/>
            <person name="Gentles S."/>
            <person name="Goble A."/>
            <person name="Hamlin N."/>
            <person name="Harris D.E."/>
            <person name="Hidalgo J."/>
            <person name="Hodgson G."/>
            <person name="Holroyd S."/>
            <person name="Hornsby T."/>
            <person name="Howarth S."/>
            <person name="Huckle E.J."/>
            <person name="Hunt S."/>
            <person name="Jagels K."/>
            <person name="James K.D."/>
            <person name="Jones L."/>
            <person name="Jones M."/>
            <person name="Leather S."/>
            <person name="McDonald S."/>
            <person name="McLean J."/>
            <person name="Mooney P."/>
            <person name="Moule S."/>
            <person name="Mungall K.L."/>
            <person name="Murphy L.D."/>
            <person name="Niblett D."/>
            <person name="Odell C."/>
            <person name="Oliver K."/>
            <person name="O'Neil S."/>
            <person name="Pearson D."/>
            <person name="Quail M.A."/>
            <person name="Rabbinowitsch E."/>
            <person name="Rutherford K.M."/>
            <person name="Rutter S."/>
            <person name="Saunders D."/>
            <person name="Seeger K."/>
            <person name="Sharp S."/>
            <person name="Skelton J."/>
            <person name="Simmonds M.N."/>
            <person name="Squares R."/>
            <person name="Squares S."/>
            <person name="Stevens K."/>
            <person name="Taylor K."/>
            <person name="Taylor R.G."/>
            <person name="Tivey A."/>
            <person name="Walsh S.V."/>
            <person name="Warren T."/>
            <person name="Whitehead S."/>
            <person name="Woodward J.R."/>
            <person name="Volckaert G."/>
            <person name="Aert R."/>
            <person name="Robben J."/>
            <person name="Grymonprez B."/>
            <person name="Weltjens I."/>
            <person name="Vanstreels E."/>
            <person name="Rieger M."/>
            <person name="Schaefer M."/>
            <person name="Mueller-Auer S."/>
            <person name="Gabel C."/>
            <person name="Fuchs M."/>
            <person name="Duesterhoeft A."/>
            <person name="Fritzc C."/>
            <person name="Holzer E."/>
            <person name="Moestl D."/>
            <person name="Hilbert H."/>
            <person name="Borzym K."/>
            <person name="Langer I."/>
            <person name="Beck A."/>
            <person name="Lehrach H."/>
            <person name="Reinhardt R."/>
            <person name="Pohl T.M."/>
            <person name="Eger P."/>
            <person name="Zimmermann W."/>
            <person name="Wedler H."/>
            <person name="Wambutt R."/>
            <person name="Purnelle B."/>
            <person name="Goffeau A."/>
            <person name="Cadieu E."/>
            <person name="Dreano S."/>
            <person name="Gloux S."/>
            <person name="Lelaure V."/>
            <person name="Mottier S."/>
            <person name="Galibert F."/>
            <person name="Aves S.J."/>
            <person name="Xiang Z."/>
            <person name="Hunt C."/>
            <person name="Moore K."/>
            <person name="Hurst S.M."/>
            <person name="Lucas M."/>
            <person name="Rochet M."/>
            <person name="Gaillardin C."/>
            <person name="Tallada V.A."/>
            <person name="Garzon A."/>
            <person name="Thode G."/>
            <person name="Daga R.R."/>
            <person name="Cruzado L."/>
            <person name="Jimenez J."/>
            <person name="Sanchez M."/>
            <person name="del Rey F."/>
            <person name="Benito J."/>
            <person name="Dominguez A."/>
            <person name="Revuelta J.L."/>
            <person name="Moreno S."/>
            <person name="Armstrong J."/>
            <person name="Forsburg S.L."/>
            <person name="Cerutti L."/>
            <person name="Lowe T."/>
            <person name="McCombie W.R."/>
            <person name="Paulsen I."/>
            <person name="Potashkin J."/>
            <person name="Shpakovski G.V."/>
            <person name="Ussery D."/>
            <person name="Barrell B.G."/>
            <person name="Nurse P."/>
        </authorList>
    </citation>
    <scope>NUCLEOTIDE SEQUENCE [LARGE SCALE GENOMIC DNA]</scope>
    <source>
        <strain>972 / ATCC 24843</strain>
    </source>
</reference>
<reference key="2">
    <citation type="journal article" date="2006" name="Nat. Biotechnol.">
        <title>ORFeome cloning and global analysis of protein localization in the fission yeast Schizosaccharomyces pombe.</title>
        <authorList>
            <person name="Matsuyama A."/>
            <person name="Arai R."/>
            <person name="Yashiroda Y."/>
            <person name="Shirai A."/>
            <person name="Kamata A."/>
            <person name="Sekido S."/>
            <person name="Kobayashi Y."/>
            <person name="Hashimoto A."/>
            <person name="Hamamoto M."/>
            <person name="Hiraoka Y."/>
            <person name="Horinouchi S."/>
            <person name="Yoshida M."/>
        </authorList>
    </citation>
    <scope>SUBCELLULAR LOCATION [LARGE SCALE ANALYSIS]</scope>
</reference>
<protein>
    <recommendedName>
        <fullName>SPRY domain-containing protein C285.10c</fullName>
    </recommendedName>
</protein>
<evidence type="ECO:0000255" key="1"/>
<evidence type="ECO:0000255" key="2">
    <source>
        <dbReference type="PROSITE-ProRule" id="PRU00548"/>
    </source>
</evidence>
<evidence type="ECO:0000256" key="3">
    <source>
        <dbReference type="SAM" id="MobiDB-lite"/>
    </source>
</evidence>
<evidence type="ECO:0000269" key="4">
    <source>
    </source>
</evidence>
<evidence type="ECO:0000305" key="5"/>
<dbReference type="EMBL" id="CU329672">
    <property type="protein sequence ID" value="CAA20849.1"/>
    <property type="molecule type" value="Genomic_DNA"/>
</dbReference>
<dbReference type="PIR" id="T41256">
    <property type="entry name" value="T41256"/>
</dbReference>
<dbReference type="SMR" id="O74497"/>
<dbReference type="BioGRID" id="275783">
    <property type="interactions" value="26"/>
</dbReference>
<dbReference type="FunCoup" id="O74497">
    <property type="interactions" value="4"/>
</dbReference>
<dbReference type="STRING" id="284812.O74497"/>
<dbReference type="iPTMnet" id="O74497"/>
<dbReference type="PaxDb" id="4896-SPCC285.10c.1"/>
<dbReference type="EnsemblFungi" id="SPCC285.10c.1">
    <property type="protein sequence ID" value="SPCC285.10c.1:pep"/>
    <property type="gene ID" value="SPCC285.10c"/>
</dbReference>
<dbReference type="KEGG" id="spo:2539213"/>
<dbReference type="PomBase" id="SPCC285.10c"/>
<dbReference type="VEuPathDB" id="FungiDB:SPCC285.10c"/>
<dbReference type="eggNOG" id="KOG1477">
    <property type="taxonomic scope" value="Eukaryota"/>
</dbReference>
<dbReference type="HOGENOM" id="CLU_016552_2_0_1"/>
<dbReference type="InParanoid" id="O74497"/>
<dbReference type="OMA" id="CVLFIRR"/>
<dbReference type="PhylomeDB" id="O74497"/>
<dbReference type="PRO" id="PR:O74497"/>
<dbReference type="Proteomes" id="UP000002485">
    <property type="component" value="Chromosome III"/>
</dbReference>
<dbReference type="GO" id="GO:0005737">
    <property type="term" value="C:cytoplasm"/>
    <property type="evidence" value="ECO:0007005"/>
    <property type="project" value="PomBase"/>
</dbReference>
<dbReference type="GO" id="GO:0005783">
    <property type="term" value="C:endoplasmic reticulum"/>
    <property type="evidence" value="ECO:0000266"/>
    <property type="project" value="PomBase"/>
</dbReference>
<dbReference type="GO" id="GO:0016020">
    <property type="term" value="C:membrane"/>
    <property type="evidence" value="ECO:0007669"/>
    <property type="project" value="UniProtKB-SubCell"/>
</dbReference>
<dbReference type="GO" id="GO:0043328">
    <property type="term" value="P:protein transport to vacuole involved in ubiquitin-dependent protein catabolic process via the multivesicular body sorting pathway"/>
    <property type="evidence" value="ECO:0000318"/>
    <property type="project" value="GO_Central"/>
</dbReference>
<dbReference type="CDD" id="cd12910">
    <property type="entry name" value="SPRY_SSH4_like"/>
    <property type="match status" value="1"/>
</dbReference>
<dbReference type="Gene3D" id="2.60.120.920">
    <property type="match status" value="1"/>
</dbReference>
<dbReference type="InterPro" id="IPR001870">
    <property type="entry name" value="B30.2/SPRY"/>
</dbReference>
<dbReference type="InterPro" id="IPR043136">
    <property type="entry name" value="B30.2/SPRY_sf"/>
</dbReference>
<dbReference type="InterPro" id="IPR013320">
    <property type="entry name" value="ConA-like_dom_sf"/>
</dbReference>
<dbReference type="InterPro" id="IPR003877">
    <property type="entry name" value="SPRY_dom"/>
</dbReference>
<dbReference type="InterPro" id="IPR035780">
    <property type="entry name" value="SPRY_Ssh4-like"/>
</dbReference>
<dbReference type="InterPro" id="IPR050618">
    <property type="entry name" value="Ubq-SigPath_Reg"/>
</dbReference>
<dbReference type="PANTHER" id="PTHR12864">
    <property type="entry name" value="RAN BINDING PROTEIN 9-RELATED"/>
    <property type="match status" value="1"/>
</dbReference>
<dbReference type="Pfam" id="PF00622">
    <property type="entry name" value="SPRY"/>
    <property type="match status" value="1"/>
</dbReference>
<dbReference type="SMART" id="SM00449">
    <property type="entry name" value="SPRY"/>
    <property type="match status" value="1"/>
</dbReference>
<dbReference type="SUPFAM" id="SSF49899">
    <property type="entry name" value="Concanavalin A-like lectins/glucanases"/>
    <property type="match status" value="1"/>
</dbReference>
<dbReference type="PROSITE" id="PS50188">
    <property type="entry name" value="B302_SPRY"/>
    <property type="match status" value="1"/>
</dbReference>
<name>YCRA_SCHPO</name>
<gene>
    <name type="ORF">SPCC285.10c</name>
</gene>
<organism>
    <name type="scientific">Schizosaccharomyces pombe (strain 972 / ATCC 24843)</name>
    <name type="common">Fission yeast</name>
    <dbReference type="NCBI Taxonomy" id="284812"/>
    <lineage>
        <taxon>Eukaryota</taxon>
        <taxon>Fungi</taxon>
        <taxon>Dikarya</taxon>
        <taxon>Ascomycota</taxon>
        <taxon>Taphrinomycotina</taxon>
        <taxon>Schizosaccharomycetes</taxon>
        <taxon>Schizosaccharomycetales</taxon>
        <taxon>Schizosaccharomycetaceae</taxon>
        <taxon>Schizosaccharomyces</taxon>
    </lineage>
</organism>
<keyword id="KW-0963">Cytoplasm</keyword>
<keyword id="KW-0472">Membrane</keyword>
<keyword id="KW-1185">Reference proteome</keyword>
<keyword id="KW-0812">Transmembrane</keyword>
<keyword id="KW-1133">Transmembrane helix</keyword>
<proteinExistence type="predicted"/>